<feature type="chain" id="PRO_0000101035" description="Threonine--tRNA ligase">
    <location>
        <begin position="1"/>
        <end position="658"/>
    </location>
</feature>
<feature type="domain" description="TGS" evidence="2">
    <location>
        <begin position="1"/>
        <end position="63"/>
    </location>
</feature>
<feature type="region of interest" description="Catalytic" evidence="1">
    <location>
        <begin position="245"/>
        <end position="548"/>
    </location>
</feature>
<feature type="binding site" evidence="1">
    <location>
        <position position="341"/>
    </location>
    <ligand>
        <name>Zn(2+)</name>
        <dbReference type="ChEBI" id="CHEBI:29105"/>
    </ligand>
</feature>
<feature type="binding site" evidence="1">
    <location>
        <position position="392"/>
    </location>
    <ligand>
        <name>Zn(2+)</name>
        <dbReference type="ChEBI" id="CHEBI:29105"/>
    </ligand>
</feature>
<feature type="binding site" evidence="1">
    <location>
        <position position="525"/>
    </location>
    <ligand>
        <name>Zn(2+)</name>
        <dbReference type="ChEBI" id="CHEBI:29105"/>
    </ligand>
</feature>
<protein>
    <recommendedName>
        <fullName evidence="1">Threonine--tRNA ligase</fullName>
        <ecNumber evidence="1">6.1.1.3</ecNumber>
    </recommendedName>
    <alternativeName>
        <fullName evidence="1">Threonyl-tRNA synthetase</fullName>
        <shortName evidence="1">ThrRS</shortName>
    </alternativeName>
</protein>
<keyword id="KW-0030">Aminoacyl-tRNA synthetase</keyword>
<keyword id="KW-0067">ATP-binding</keyword>
<keyword id="KW-0963">Cytoplasm</keyword>
<keyword id="KW-0436">Ligase</keyword>
<keyword id="KW-0479">Metal-binding</keyword>
<keyword id="KW-0547">Nucleotide-binding</keyword>
<keyword id="KW-0648">Protein biosynthesis</keyword>
<keyword id="KW-0694">RNA-binding</keyword>
<keyword id="KW-0820">tRNA-binding</keyword>
<keyword id="KW-0862">Zinc</keyword>
<dbReference type="EC" id="6.1.1.3" evidence="1"/>
<dbReference type="EMBL" id="BX572604">
    <property type="protein sequence ID" value="CAE28847.1"/>
    <property type="molecule type" value="Genomic_DNA"/>
</dbReference>
<dbReference type="SMR" id="Q6N4D3"/>
<dbReference type="STRING" id="258594.RPA3406"/>
<dbReference type="eggNOG" id="COG0441">
    <property type="taxonomic scope" value="Bacteria"/>
</dbReference>
<dbReference type="HOGENOM" id="CLU_008554_0_1_5"/>
<dbReference type="PhylomeDB" id="Q6N4D3"/>
<dbReference type="GO" id="GO:0005829">
    <property type="term" value="C:cytosol"/>
    <property type="evidence" value="ECO:0007669"/>
    <property type="project" value="TreeGrafter"/>
</dbReference>
<dbReference type="GO" id="GO:0005524">
    <property type="term" value="F:ATP binding"/>
    <property type="evidence" value="ECO:0007669"/>
    <property type="project" value="UniProtKB-UniRule"/>
</dbReference>
<dbReference type="GO" id="GO:0046872">
    <property type="term" value="F:metal ion binding"/>
    <property type="evidence" value="ECO:0007669"/>
    <property type="project" value="UniProtKB-KW"/>
</dbReference>
<dbReference type="GO" id="GO:0004829">
    <property type="term" value="F:threonine-tRNA ligase activity"/>
    <property type="evidence" value="ECO:0007669"/>
    <property type="project" value="UniProtKB-UniRule"/>
</dbReference>
<dbReference type="GO" id="GO:0000049">
    <property type="term" value="F:tRNA binding"/>
    <property type="evidence" value="ECO:0007669"/>
    <property type="project" value="UniProtKB-KW"/>
</dbReference>
<dbReference type="GO" id="GO:0006435">
    <property type="term" value="P:threonyl-tRNA aminoacylation"/>
    <property type="evidence" value="ECO:0007669"/>
    <property type="project" value="UniProtKB-UniRule"/>
</dbReference>
<dbReference type="CDD" id="cd01667">
    <property type="entry name" value="TGS_ThrRS"/>
    <property type="match status" value="1"/>
</dbReference>
<dbReference type="CDD" id="cd00860">
    <property type="entry name" value="ThrRS_anticodon"/>
    <property type="match status" value="1"/>
</dbReference>
<dbReference type="CDD" id="cd00771">
    <property type="entry name" value="ThrRS_core"/>
    <property type="match status" value="1"/>
</dbReference>
<dbReference type="FunFam" id="3.10.20.30:FF:000005">
    <property type="entry name" value="Threonine--tRNA ligase"/>
    <property type="match status" value="1"/>
</dbReference>
<dbReference type="FunFam" id="3.30.54.20:FF:000002">
    <property type="entry name" value="Threonine--tRNA ligase"/>
    <property type="match status" value="1"/>
</dbReference>
<dbReference type="FunFam" id="3.30.930.10:FF:000002">
    <property type="entry name" value="Threonine--tRNA ligase"/>
    <property type="match status" value="1"/>
</dbReference>
<dbReference type="FunFam" id="3.40.50.800:FF:000001">
    <property type="entry name" value="Threonine--tRNA ligase"/>
    <property type="match status" value="1"/>
</dbReference>
<dbReference type="FunFam" id="3.30.980.10:FF:000005">
    <property type="entry name" value="Threonyl-tRNA synthetase, mitochondrial"/>
    <property type="match status" value="1"/>
</dbReference>
<dbReference type="Gene3D" id="3.10.20.30">
    <property type="match status" value="1"/>
</dbReference>
<dbReference type="Gene3D" id="3.30.54.20">
    <property type="match status" value="1"/>
</dbReference>
<dbReference type="Gene3D" id="3.40.50.800">
    <property type="entry name" value="Anticodon-binding domain"/>
    <property type="match status" value="1"/>
</dbReference>
<dbReference type="Gene3D" id="3.30.930.10">
    <property type="entry name" value="Bira Bifunctional Protein, Domain 2"/>
    <property type="match status" value="1"/>
</dbReference>
<dbReference type="Gene3D" id="3.30.980.10">
    <property type="entry name" value="Threonyl-trna Synthetase, Chain A, domain 2"/>
    <property type="match status" value="1"/>
</dbReference>
<dbReference type="HAMAP" id="MF_00184">
    <property type="entry name" value="Thr_tRNA_synth"/>
    <property type="match status" value="1"/>
</dbReference>
<dbReference type="InterPro" id="IPR002314">
    <property type="entry name" value="aa-tRNA-synt_IIb"/>
</dbReference>
<dbReference type="InterPro" id="IPR006195">
    <property type="entry name" value="aa-tRNA-synth_II"/>
</dbReference>
<dbReference type="InterPro" id="IPR045864">
    <property type="entry name" value="aa-tRNA-synth_II/BPL/LPL"/>
</dbReference>
<dbReference type="InterPro" id="IPR004154">
    <property type="entry name" value="Anticodon-bd"/>
</dbReference>
<dbReference type="InterPro" id="IPR036621">
    <property type="entry name" value="Anticodon-bd_dom_sf"/>
</dbReference>
<dbReference type="InterPro" id="IPR012675">
    <property type="entry name" value="Beta-grasp_dom_sf"/>
</dbReference>
<dbReference type="InterPro" id="IPR004095">
    <property type="entry name" value="TGS"/>
</dbReference>
<dbReference type="InterPro" id="IPR012676">
    <property type="entry name" value="TGS-like"/>
</dbReference>
<dbReference type="InterPro" id="IPR002320">
    <property type="entry name" value="Thr-tRNA-ligase_IIa"/>
</dbReference>
<dbReference type="InterPro" id="IPR018163">
    <property type="entry name" value="Thr/Ala-tRNA-synth_IIc_edit"/>
</dbReference>
<dbReference type="InterPro" id="IPR047246">
    <property type="entry name" value="ThrRS_anticodon"/>
</dbReference>
<dbReference type="InterPro" id="IPR033728">
    <property type="entry name" value="ThrRS_core"/>
</dbReference>
<dbReference type="InterPro" id="IPR012947">
    <property type="entry name" value="tRNA_SAD"/>
</dbReference>
<dbReference type="NCBIfam" id="TIGR00418">
    <property type="entry name" value="thrS"/>
    <property type="match status" value="1"/>
</dbReference>
<dbReference type="PANTHER" id="PTHR11451:SF44">
    <property type="entry name" value="THREONINE--TRNA LIGASE, CHLOROPLASTIC_MITOCHONDRIAL 2"/>
    <property type="match status" value="1"/>
</dbReference>
<dbReference type="PANTHER" id="PTHR11451">
    <property type="entry name" value="THREONINE-TRNA LIGASE"/>
    <property type="match status" value="1"/>
</dbReference>
<dbReference type="Pfam" id="PF03129">
    <property type="entry name" value="HGTP_anticodon"/>
    <property type="match status" value="1"/>
</dbReference>
<dbReference type="Pfam" id="PF02824">
    <property type="entry name" value="TGS"/>
    <property type="match status" value="1"/>
</dbReference>
<dbReference type="Pfam" id="PF00587">
    <property type="entry name" value="tRNA-synt_2b"/>
    <property type="match status" value="1"/>
</dbReference>
<dbReference type="Pfam" id="PF07973">
    <property type="entry name" value="tRNA_SAD"/>
    <property type="match status" value="1"/>
</dbReference>
<dbReference type="PRINTS" id="PR01047">
    <property type="entry name" value="TRNASYNTHTHR"/>
</dbReference>
<dbReference type="SMART" id="SM00863">
    <property type="entry name" value="tRNA_SAD"/>
    <property type="match status" value="1"/>
</dbReference>
<dbReference type="SUPFAM" id="SSF52954">
    <property type="entry name" value="Class II aaRS ABD-related"/>
    <property type="match status" value="1"/>
</dbReference>
<dbReference type="SUPFAM" id="SSF55681">
    <property type="entry name" value="Class II aaRS and biotin synthetases"/>
    <property type="match status" value="1"/>
</dbReference>
<dbReference type="SUPFAM" id="SSF81271">
    <property type="entry name" value="TGS-like"/>
    <property type="match status" value="1"/>
</dbReference>
<dbReference type="SUPFAM" id="SSF55186">
    <property type="entry name" value="ThrRS/AlaRS common domain"/>
    <property type="match status" value="1"/>
</dbReference>
<dbReference type="PROSITE" id="PS50862">
    <property type="entry name" value="AA_TRNA_LIGASE_II"/>
    <property type="match status" value="1"/>
</dbReference>
<dbReference type="PROSITE" id="PS51880">
    <property type="entry name" value="TGS"/>
    <property type="match status" value="1"/>
</dbReference>
<sequence>MDQITITFPDGKTREYPRGTTGLDIAKGISPSLAKRTVVMALNGTLTDLADPIDDNASIDFVARDDARALELIRHDCAHVLAEAVQSLWPGTQVTIGPTIENGFYYDFFRNEPFTPEDFAAIEKKMREIIARDKPFTKEVWTRDEAKKVFADNGEAFKVELVDAIPEDQTIKIYKQGEWFDLCRGPHMTSTGKIGTAFKLMKVAGAYWRGDSNNPMLTRIYGTAFAKQDDLDAYLHQIEEAEKRDHRKLGRELDLFHFQEEGPGVVFWHAKGWSLFQSLVGYMRRRLAGDYDEVNAPQILDKVLWETSGHWEWYRENMFAAQSAGDDAEDKRWFALKPMNCPGHVQIFKHGLKSYRDLPLRLAEFGVVHRYEPSGAMHGLMRVRGFTQDDAHVFCTEAQLAEECIKINDLILSTYSDFGFEGELTVKLSTRPEKRVGTDEMWDHAERVMATVLSEIKAKGGNRIKTEINPGEGAFYGPKFEYVLRDAIGRDWQCGTTQVDFNLPERFGAFYIDADGAKKAPVMVHRAICGSMERFTGILIEHYAGNFPLWLAPVQVVVTTITSEGDDYAKKVLAALRKAGLRADIDLRNEKINFKVREHSLAKVPALLVVGKKEAESHSVSVRRLGSDGQKVMPTDEAIAALVDEATPPDVKRMRGAA</sequence>
<reference key="1">
    <citation type="journal article" date="2004" name="Nat. Biotechnol.">
        <title>Complete genome sequence of the metabolically versatile photosynthetic bacterium Rhodopseudomonas palustris.</title>
        <authorList>
            <person name="Larimer F.W."/>
            <person name="Chain P."/>
            <person name="Hauser L."/>
            <person name="Lamerdin J.E."/>
            <person name="Malfatti S."/>
            <person name="Do L."/>
            <person name="Land M.L."/>
            <person name="Pelletier D.A."/>
            <person name="Beatty J.T."/>
            <person name="Lang A.S."/>
            <person name="Tabita F.R."/>
            <person name="Gibson J.L."/>
            <person name="Hanson T.E."/>
            <person name="Bobst C."/>
            <person name="Torres y Torres J.L."/>
            <person name="Peres C."/>
            <person name="Harrison F.H."/>
            <person name="Gibson J."/>
            <person name="Harwood C.S."/>
        </authorList>
    </citation>
    <scope>NUCLEOTIDE SEQUENCE [LARGE SCALE GENOMIC DNA]</scope>
    <source>
        <strain>ATCC BAA-98 / CGA009</strain>
    </source>
</reference>
<gene>
    <name evidence="1" type="primary">thrS</name>
    <name type="ordered locus">RPA3406</name>
</gene>
<name>SYT_RHOPA</name>
<evidence type="ECO:0000255" key="1">
    <source>
        <dbReference type="HAMAP-Rule" id="MF_00184"/>
    </source>
</evidence>
<evidence type="ECO:0000255" key="2">
    <source>
        <dbReference type="PROSITE-ProRule" id="PRU01228"/>
    </source>
</evidence>
<proteinExistence type="inferred from homology"/>
<accession>Q6N4D3</accession>
<comment type="function">
    <text evidence="1">Catalyzes the attachment of threonine to tRNA(Thr) in a two-step reaction: L-threonine is first activated by ATP to form Thr-AMP and then transferred to the acceptor end of tRNA(Thr). Also edits incorrectly charged L-seryl-tRNA(Thr).</text>
</comment>
<comment type="catalytic activity">
    <reaction evidence="1">
        <text>tRNA(Thr) + L-threonine + ATP = L-threonyl-tRNA(Thr) + AMP + diphosphate + H(+)</text>
        <dbReference type="Rhea" id="RHEA:24624"/>
        <dbReference type="Rhea" id="RHEA-COMP:9670"/>
        <dbReference type="Rhea" id="RHEA-COMP:9704"/>
        <dbReference type="ChEBI" id="CHEBI:15378"/>
        <dbReference type="ChEBI" id="CHEBI:30616"/>
        <dbReference type="ChEBI" id="CHEBI:33019"/>
        <dbReference type="ChEBI" id="CHEBI:57926"/>
        <dbReference type="ChEBI" id="CHEBI:78442"/>
        <dbReference type="ChEBI" id="CHEBI:78534"/>
        <dbReference type="ChEBI" id="CHEBI:456215"/>
        <dbReference type="EC" id="6.1.1.3"/>
    </reaction>
</comment>
<comment type="cofactor">
    <cofactor evidence="1">
        <name>Zn(2+)</name>
        <dbReference type="ChEBI" id="CHEBI:29105"/>
    </cofactor>
    <text evidence="1">Binds 1 zinc ion per subunit.</text>
</comment>
<comment type="subunit">
    <text evidence="1">Homodimer.</text>
</comment>
<comment type="subcellular location">
    <subcellularLocation>
        <location evidence="1">Cytoplasm</location>
    </subcellularLocation>
</comment>
<comment type="similarity">
    <text evidence="1">Belongs to the class-II aminoacyl-tRNA synthetase family.</text>
</comment>
<organism>
    <name type="scientific">Rhodopseudomonas palustris (strain ATCC BAA-98 / CGA009)</name>
    <dbReference type="NCBI Taxonomy" id="258594"/>
    <lineage>
        <taxon>Bacteria</taxon>
        <taxon>Pseudomonadati</taxon>
        <taxon>Pseudomonadota</taxon>
        <taxon>Alphaproteobacteria</taxon>
        <taxon>Hyphomicrobiales</taxon>
        <taxon>Nitrobacteraceae</taxon>
        <taxon>Rhodopseudomonas</taxon>
    </lineage>
</organism>